<name>COQ4_XENLA</name>
<organism>
    <name type="scientific">Xenopus laevis</name>
    <name type="common">African clawed frog</name>
    <dbReference type="NCBI Taxonomy" id="8355"/>
    <lineage>
        <taxon>Eukaryota</taxon>
        <taxon>Metazoa</taxon>
        <taxon>Chordata</taxon>
        <taxon>Craniata</taxon>
        <taxon>Vertebrata</taxon>
        <taxon>Euteleostomi</taxon>
        <taxon>Amphibia</taxon>
        <taxon>Batrachia</taxon>
        <taxon>Anura</taxon>
        <taxon>Pipoidea</taxon>
        <taxon>Pipidae</taxon>
        <taxon>Xenopodinae</taxon>
        <taxon>Xenopus</taxon>
        <taxon>Xenopus</taxon>
    </lineage>
</organism>
<feature type="chain" id="PRO_0000388054" description="Ubiquinone biosynthesis protein COQ4 homolog, mitochondrial">
    <location>
        <begin position="1"/>
        <end position="283"/>
    </location>
</feature>
<feature type="binding site" evidence="1">
    <location>
        <position position="185"/>
    </location>
    <ligand>
        <name>Zn(2+)</name>
        <dbReference type="ChEBI" id="CHEBI:29105"/>
    </ligand>
</feature>
<feature type="binding site" evidence="1">
    <location>
        <position position="186"/>
    </location>
    <ligand>
        <name>Zn(2+)</name>
        <dbReference type="ChEBI" id="CHEBI:29105"/>
    </ligand>
</feature>
<feature type="binding site" evidence="1">
    <location>
        <position position="189"/>
    </location>
    <ligand>
        <name>Zn(2+)</name>
        <dbReference type="ChEBI" id="CHEBI:29105"/>
    </ligand>
</feature>
<feature type="binding site" evidence="1">
    <location>
        <position position="201"/>
    </location>
    <ligand>
        <name>Zn(2+)</name>
        <dbReference type="ChEBI" id="CHEBI:29105"/>
    </ligand>
</feature>
<protein>
    <recommendedName>
        <fullName evidence="1">Ubiquinone biosynthesis protein COQ4 homolog, mitochondrial</fullName>
    </recommendedName>
    <alternativeName>
        <fullName>4-hydroxy-3-methoxy-5-polyprenylbenzoate decarboxylase</fullName>
        <ecNumber evidence="1">4.1.1.130</ecNumber>
    </alternativeName>
    <alternativeName>
        <fullName evidence="1">Coenzyme Q biosynthesis protein 4 homolog</fullName>
    </alternativeName>
</protein>
<comment type="function">
    <text evidence="1">Lyase that catalyzes the C1-decarboxylation of 4-hydroxy-3-methoxy-5-(all-trans-polyprenyl)benzoic acid into 2-methoxy-6-(all-trans-polyprenyl)phenol during ubiquinone biosynthesis.</text>
</comment>
<comment type="catalytic activity">
    <reaction evidence="1">
        <text>a 4-hydroxy-3-methoxy-5-(all-trans-polyprenyl)benzoate + H(+) = a 2-methoxy-6-(all-trans-polyprenyl)phenol + CO2</text>
        <dbReference type="Rhea" id="RHEA:81179"/>
        <dbReference type="Rhea" id="RHEA-COMP:9551"/>
        <dbReference type="Rhea" id="RHEA-COMP:10931"/>
        <dbReference type="ChEBI" id="CHEBI:15378"/>
        <dbReference type="ChEBI" id="CHEBI:16526"/>
        <dbReference type="ChEBI" id="CHEBI:62731"/>
        <dbReference type="ChEBI" id="CHEBI:84443"/>
        <dbReference type="EC" id="4.1.1.130"/>
    </reaction>
</comment>
<comment type="cofactor">
    <cofactor evidence="1">
        <name>Zn(2+)</name>
        <dbReference type="ChEBI" id="CHEBI:29105"/>
    </cofactor>
</comment>
<comment type="pathway">
    <text evidence="1">Cofactor biosynthesis; ubiquinone biosynthesis.</text>
</comment>
<comment type="subunit">
    <text evidence="1">Component of a multi-subunit COQ enzyme complex, composed of at least coq3, coq4, coq5, coq6, coq7 and coq9.</text>
</comment>
<comment type="subcellular location">
    <subcellularLocation>
        <location evidence="1">Mitochondrion inner membrane</location>
        <topology evidence="1">Peripheral membrane protein</topology>
        <orientation evidence="1">Matrix side</orientation>
    </subcellularLocation>
</comment>
<comment type="miscellaneous">
    <text evidence="1">This protein may be expected to contain an N-terminal transit peptide but none has been predicted.</text>
</comment>
<comment type="similarity">
    <text evidence="1">Belongs to the COQ4 family.</text>
</comment>
<proteinExistence type="evidence at transcript level"/>
<gene>
    <name type="primary">coq4</name>
</gene>
<accession>A9JS49</accession>
<keyword id="KW-0456">Lyase</keyword>
<keyword id="KW-0472">Membrane</keyword>
<keyword id="KW-0479">Metal-binding</keyword>
<keyword id="KW-0496">Mitochondrion</keyword>
<keyword id="KW-0999">Mitochondrion inner membrane</keyword>
<keyword id="KW-1185">Reference proteome</keyword>
<keyword id="KW-0831">Ubiquinone biosynthesis</keyword>
<keyword id="KW-0862">Zinc</keyword>
<reference key="1">
    <citation type="submission" date="2007-12" db="EMBL/GenBank/DDBJ databases">
        <authorList>
            <consortium name="NIH - Xenopus Gene Collection (XGC) project"/>
        </authorList>
    </citation>
    <scope>NUCLEOTIDE SEQUENCE [LARGE SCALE MRNA]</scope>
    <source>
        <tissue>Embryo</tissue>
        <tissue>Oocyte</tissue>
    </source>
</reference>
<dbReference type="EC" id="4.1.1.130" evidence="1"/>
<dbReference type="EMBL" id="BC155917">
    <property type="protein sequence ID" value="AAI55918.1"/>
    <property type="molecule type" value="mRNA"/>
</dbReference>
<dbReference type="EMBL" id="BC169417">
    <property type="protein sequence ID" value="AAI69417.1"/>
    <property type="molecule type" value="mRNA"/>
</dbReference>
<dbReference type="EMBL" id="BC169419">
    <property type="protein sequence ID" value="AAI69419.1"/>
    <property type="molecule type" value="mRNA"/>
</dbReference>
<dbReference type="RefSeq" id="NP_001106344.1">
    <property type="nucleotide sequence ID" value="NM_001112873.1"/>
</dbReference>
<dbReference type="SMR" id="A9JS49"/>
<dbReference type="GeneID" id="100127306"/>
<dbReference type="KEGG" id="xla:100127306"/>
<dbReference type="AGR" id="Xenbase:XB-GENE-5888863"/>
<dbReference type="CTD" id="100127306"/>
<dbReference type="Xenbase" id="XB-GENE-5888863">
    <property type="gene designation" value="coq4.L"/>
</dbReference>
<dbReference type="OrthoDB" id="4249at2759"/>
<dbReference type="UniPathway" id="UPA00232"/>
<dbReference type="Proteomes" id="UP000186698">
    <property type="component" value="Chromosome 8L"/>
</dbReference>
<dbReference type="Bgee" id="100127306">
    <property type="expression patterns" value="Expressed in muscle tissue and 20 other cell types or tissues"/>
</dbReference>
<dbReference type="GO" id="GO:0031314">
    <property type="term" value="C:extrinsic component of mitochondrial inner membrane"/>
    <property type="evidence" value="ECO:0007669"/>
    <property type="project" value="UniProtKB-UniRule"/>
</dbReference>
<dbReference type="GO" id="GO:0005739">
    <property type="term" value="C:mitochondrion"/>
    <property type="evidence" value="ECO:0000318"/>
    <property type="project" value="GO_Central"/>
</dbReference>
<dbReference type="GO" id="GO:0120539">
    <property type="term" value="F:4-hydroxy-3-methoxy-5-polyprenylbenzoate decarboxylase activity"/>
    <property type="evidence" value="ECO:0000250"/>
    <property type="project" value="UniProtKB"/>
</dbReference>
<dbReference type="GO" id="GO:0006744">
    <property type="term" value="P:ubiquinone biosynthetic process"/>
    <property type="evidence" value="ECO:0000250"/>
    <property type="project" value="UniProtKB"/>
</dbReference>
<dbReference type="HAMAP" id="MF_03111">
    <property type="entry name" value="Coq4"/>
    <property type="match status" value="1"/>
</dbReference>
<dbReference type="InterPro" id="IPR007715">
    <property type="entry name" value="Coq4"/>
</dbReference>
<dbReference type="InterPro" id="IPR027540">
    <property type="entry name" value="Coq4_euk"/>
</dbReference>
<dbReference type="PANTHER" id="PTHR12922">
    <property type="entry name" value="UBIQUINONE BIOSYNTHESIS PROTEIN"/>
    <property type="match status" value="1"/>
</dbReference>
<dbReference type="PANTHER" id="PTHR12922:SF7">
    <property type="entry name" value="UBIQUINONE BIOSYNTHESIS PROTEIN COQ4 HOMOLOG, MITOCHONDRIAL"/>
    <property type="match status" value="1"/>
</dbReference>
<dbReference type="Pfam" id="PF05019">
    <property type="entry name" value="Coq4"/>
    <property type="match status" value="1"/>
</dbReference>
<evidence type="ECO:0000255" key="1">
    <source>
        <dbReference type="HAMAP-Rule" id="MF_03111"/>
    </source>
</evidence>
<sequence>MKILLSCLRFSPVWRGPRSAACVMQGGKLQRFQSYNTAEEGIEEDIQFAATNQESSSLLYPDHIPTNAVQKLLLSAGSAVMALYDPYRHDMVAVLGETTGAVALRKLRDQMRRDPEGLQILQERPRISTSTLDMQALREMQDGTLGREYARFLDVNRVTPDTRMPVKFVDDEELAYVAQRYREVHDLMHTLLGMPTNMLGEVVVKWFEAVQTGLPMCILGAAFGPLRLNNKRMQKLGVLVPWAVQSGRNARCVLNFHYENRWEQSVLSLRKEIGILPLPEIKA</sequence>